<protein>
    <recommendedName>
        <fullName evidence="1">3-dehydroquinate dehydratase</fullName>
        <shortName evidence="1">3-dehydroquinase</shortName>
        <ecNumber evidence="1">4.2.1.10</ecNumber>
    </recommendedName>
    <alternativeName>
        <fullName evidence="1">Type II DHQase</fullName>
    </alternativeName>
</protein>
<feature type="chain" id="PRO_1000097586" description="3-dehydroquinate dehydratase">
    <location>
        <begin position="1"/>
        <end position="151"/>
    </location>
</feature>
<feature type="active site" description="Proton acceptor" evidence="1">
    <location>
        <position position="24"/>
    </location>
</feature>
<feature type="active site" description="Proton donor" evidence="1">
    <location>
        <position position="102"/>
    </location>
</feature>
<feature type="binding site" evidence="1">
    <location>
        <position position="76"/>
    </location>
    <ligand>
        <name>substrate</name>
    </ligand>
</feature>
<feature type="binding site" evidence="1">
    <location>
        <position position="82"/>
    </location>
    <ligand>
        <name>substrate</name>
    </ligand>
</feature>
<feature type="binding site" evidence="1">
    <location>
        <position position="89"/>
    </location>
    <ligand>
        <name>substrate</name>
    </ligand>
</feature>
<feature type="binding site" evidence="1">
    <location>
        <begin position="103"/>
        <end position="104"/>
    </location>
    <ligand>
        <name>substrate</name>
    </ligand>
</feature>
<feature type="binding site" evidence="1">
    <location>
        <position position="113"/>
    </location>
    <ligand>
        <name>substrate</name>
    </ligand>
</feature>
<feature type="site" description="Transition state stabilizer" evidence="1">
    <location>
        <position position="19"/>
    </location>
</feature>
<organism>
    <name type="scientific">Acinetobacter baumannii (strain SDF)</name>
    <dbReference type="NCBI Taxonomy" id="509170"/>
    <lineage>
        <taxon>Bacteria</taxon>
        <taxon>Pseudomonadati</taxon>
        <taxon>Pseudomonadota</taxon>
        <taxon>Gammaproteobacteria</taxon>
        <taxon>Moraxellales</taxon>
        <taxon>Moraxellaceae</taxon>
        <taxon>Acinetobacter</taxon>
        <taxon>Acinetobacter calcoaceticus/baumannii complex</taxon>
    </lineage>
</organism>
<keyword id="KW-0028">Amino-acid biosynthesis</keyword>
<keyword id="KW-0057">Aromatic amino acid biosynthesis</keyword>
<keyword id="KW-0456">Lyase</keyword>
<dbReference type="EC" id="4.2.1.10" evidence="1"/>
<dbReference type="EMBL" id="CU468230">
    <property type="protein sequence ID" value="CAP01513.1"/>
    <property type="molecule type" value="Genomic_DNA"/>
</dbReference>
<dbReference type="SMR" id="B0VR94"/>
<dbReference type="KEGG" id="abm:ABSDF2188"/>
<dbReference type="HOGENOM" id="CLU_090968_1_0_6"/>
<dbReference type="UniPathway" id="UPA00053">
    <property type="reaction ID" value="UER00086"/>
</dbReference>
<dbReference type="Proteomes" id="UP000001741">
    <property type="component" value="Chromosome"/>
</dbReference>
<dbReference type="GO" id="GO:0003855">
    <property type="term" value="F:3-dehydroquinate dehydratase activity"/>
    <property type="evidence" value="ECO:0007669"/>
    <property type="project" value="UniProtKB-UniRule"/>
</dbReference>
<dbReference type="GO" id="GO:0008652">
    <property type="term" value="P:amino acid biosynthetic process"/>
    <property type="evidence" value="ECO:0007669"/>
    <property type="project" value="UniProtKB-KW"/>
</dbReference>
<dbReference type="GO" id="GO:0009073">
    <property type="term" value="P:aromatic amino acid family biosynthetic process"/>
    <property type="evidence" value="ECO:0007669"/>
    <property type="project" value="UniProtKB-KW"/>
</dbReference>
<dbReference type="GO" id="GO:0009423">
    <property type="term" value="P:chorismate biosynthetic process"/>
    <property type="evidence" value="ECO:0007669"/>
    <property type="project" value="UniProtKB-UniRule"/>
</dbReference>
<dbReference type="GO" id="GO:0019631">
    <property type="term" value="P:quinate catabolic process"/>
    <property type="evidence" value="ECO:0007669"/>
    <property type="project" value="TreeGrafter"/>
</dbReference>
<dbReference type="CDD" id="cd00466">
    <property type="entry name" value="DHQase_II"/>
    <property type="match status" value="1"/>
</dbReference>
<dbReference type="Gene3D" id="3.40.50.9100">
    <property type="entry name" value="Dehydroquinase, class II"/>
    <property type="match status" value="1"/>
</dbReference>
<dbReference type="HAMAP" id="MF_00169">
    <property type="entry name" value="AroQ"/>
    <property type="match status" value="1"/>
</dbReference>
<dbReference type="InterPro" id="IPR001874">
    <property type="entry name" value="DHquinase_II"/>
</dbReference>
<dbReference type="InterPro" id="IPR018509">
    <property type="entry name" value="DHquinase_II_CS"/>
</dbReference>
<dbReference type="InterPro" id="IPR036441">
    <property type="entry name" value="DHquinase_II_sf"/>
</dbReference>
<dbReference type="NCBIfam" id="TIGR01088">
    <property type="entry name" value="aroQ"/>
    <property type="match status" value="1"/>
</dbReference>
<dbReference type="NCBIfam" id="NF003804">
    <property type="entry name" value="PRK05395.1-1"/>
    <property type="match status" value="1"/>
</dbReference>
<dbReference type="NCBIfam" id="NF003805">
    <property type="entry name" value="PRK05395.1-2"/>
    <property type="match status" value="1"/>
</dbReference>
<dbReference type="NCBIfam" id="NF003806">
    <property type="entry name" value="PRK05395.1-3"/>
    <property type="match status" value="1"/>
</dbReference>
<dbReference type="NCBIfam" id="NF003807">
    <property type="entry name" value="PRK05395.1-4"/>
    <property type="match status" value="1"/>
</dbReference>
<dbReference type="PANTHER" id="PTHR21272">
    <property type="entry name" value="CATABOLIC 3-DEHYDROQUINASE"/>
    <property type="match status" value="1"/>
</dbReference>
<dbReference type="PANTHER" id="PTHR21272:SF3">
    <property type="entry name" value="CATABOLIC 3-DEHYDROQUINASE"/>
    <property type="match status" value="1"/>
</dbReference>
<dbReference type="Pfam" id="PF01220">
    <property type="entry name" value="DHquinase_II"/>
    <property type="match status" value="1"/>
</dbReference>
<dbReference type="PIRSF" id="PIRSF001399">
    <property type="entry name" value="DHquinase_II"/>
    <property type="match status" value="1"/>
</dbReference>
<dbReference type="SUPFAM" id="SSF52304">
    <property type="entry name" value="Type II 3-dehydroquinate dehydratase"/>
    <property type="match status" value="1"/>
</dbReference>
<dbReference type="PROSITE" id="PS01029">
    <property type="entry name" value="DEHYDROQUINASE_II"/>
    <property type="match status" value="1"/>
</dbReference>
<accession>B0VR94</accession>
<comment type="function">
    <text evidence="1">Catalyzes a trans-dehydration via an enolate intermediate.</text>
</comment>
<comment type="catalytic activity">
    <reaction evidence="1">
        <text>3-dehydroquinate = 3-dehydroshikimate + H2O</text>
        <dbReference type="Rhea" id="RHEA:21096"/>
        <dbReference type="ChEBI" id="CHEBI:15377"/>
        <dbReference type="ChEBI" id="CHEBI:16630"/>
        <dbReference type="ChEBI" id="CHEBI:32364"/>
        <dbReference type="EC" id="4.2.1.10"/>
    </reaction>
</comment>
<comment type="pathway">
    <text evidence="1">Metabolic intermediate biosynthesis; chorismate biosynthesis; chorismate from D-erythrose 4-phosphate and phosphoenolpyruvate: step 3/7.</text>
</comment>
<comment type="subunit">
    <text evidence="1">Homododecamer.</text>
</comment>
<comment type="similarity">
    <text evidence="1">Belongs to the type-II 3-dehydroquinase family.</text>
</comment>
<proteinExistence type="inferred from homology"/>
<evidence type="ECO:0000255" key="1">
    <source>
        <dbReference type="HAMAP-Rule" id="MF_00169"/>
    </source>
</evidence>
<reference key="1">
    <citation type="journal article" date="2008" name="PLoS ONE">
        <title>Comparative analysis of Acinetobacters: three genomes for three lifestyles.</title>
        <authorList>
            <person name="Vallenet D."/>
            <person name="Nordmann P."/>
            <person name="Barbe V."/>
            <person name="Poirel L."/>
            <person name="Mangenot S."/>
            <person name="Bataille E."/>
            <person name="Dossat C."/>
            <person name="Gas S."/>
            <person name="Kreimeyer A."/>
            <person name="Lenoble P."/>
            <person name="Oztas S."/>
            <person name="Poulain J."/>
            <person name="Segurens B."/>
            <person name="Robert C."/>
            <person name="Abergel C."/>
            <person name="Claverie J.-M."/>
            <person name="Raoult D."/>
            <person name="Medigue C."/>
            <person name="Weissenbach J."/>
            <person name="Cruveiller S."/>
        </authorList>
    </citation>
    <scope>NUCLEOTIDE SEQUENCE [LARGE SCALE GENOMIC DNA]</scope>
    <source>
        <strain>SDF</strain>
    </source>
</reference>
<sequence length="151" mass="16470">MSSTILVIHGPNLNLLGKREPEVYGHLTLDNINQQLIAQAEQASITLDTFQSNWEGAIVDRIHQAQTEGVKLIIINPAALTHTSVALRDALLGVAIPFIEVHLSNVHAREAFRHHSYLSDKAIGVICGLGAKGYSFALDYAIEKIQPSNPN</sequence>
<name>AROQ_ACIBS</name>
<gene>
    <name evidence="1" type="primary">aroQ</name>
    <name type="ordered locus">ABSDF2188</name>
</gene>